<name>NUOB2_ACIF5</name>
<sequence>MGIEGLLEKGFVTTTIDTVVNWGRTGSLWPMTFGLACCAVEMMHAGAARYDLDRFGIVFRPSPRQSDVMIVAGTLVNKMAPALRKVYDQMPEPRWVVSMGSCANGGGYYHYSYSIVRGCDRIVPVDIYVPGCPPTAEALLFGLVQLQKKIRRTNTIAR</sequence>
<dbReference type="EC" id="7.1.1.-" evidence="2"/>
<dbReference type="EMBL" id="CP001132">
    <property type="protein sequence ID" value="ACH84459.1"/>
    <property type="molecule type" value="Genomic_DNA"/>
</dbReference>
<dbReference type="RefSeq" id="WP_009566651.1">
    <property type="nucleotide sequence ID" value="NC_011206.1"/>
</dbReference>
<dbReference type="SMR" id="B5EN70"/>
<dbReference type="KEGG" id="afe:Lferr_2256"/>
<dbReference type="eggNOG" id="COG0377">
    <property type="taxonomic scope" value="Bacteria"/>
</dbReference>
<dbReference type="HOGENOM" id="CLU_055737_7_3_6"/>
<dbReference type="GO" id="GO:0005886">
    <property type="term" value="C:plasma membrane"/>
    <property type="evidence" value="ECO:0007669"/>
    <property type="project" value="UniProtKB-SubCell"/>
</dbReference>
<dbReference type="GO" id="GO:0045271">
    <property type="term" value="C:respiratory chain complex I"/>
    <property type="evidence" value="ECO:0007669"/>
    <property type="project" value="TreeGrafter"/>
</dbReference>
<dbReference type="GO" id="GO:0051539">
    <property type="term" value="F:4 iron, 4 sulfur cluster binding"/>
    <property type="evidence" value="ECO:0007669"/>
    <property type="project" value="UniProtKB-KW"/>
</dbReference>
<dbReference type="GO" id="GO:0005506">
    <property type="term" value="F:iron ion binding"/>
    <property type="evidence" value="ECO:0007669"/>
    <property type="project" value="UniProtKB-UniRule"/>
</dbReference>
<dbReference type="GO" id="GO:0008137">
    <property type="term" value="F:NADH dehydrogenase (ubiquinone) activity"/>
    <property type="evidence" value="ECO:0007669"/>
    <property type="project" value="InterPro"/>
</dbReference>
<dbReference type="GO" id="GO:0050136">
    <property type="term" value="F:NADH:ubiquinone reductase (non-electrogenic) activity"/>
    <property type="evidence" value="ECO:0007669"/>
    <property type="project" value="UniProtKB-UniRule"/>
</dbReference>
<dbReference type="GO" id="GO:0048038">
    <property type="term" value="F:quinone binding"/>
    <property type="evidence" value="ECO:0007669"/>
    <property type="project" value="UniProtKB-KW"/>
</dbReference>
<dbReference type="GO" id="GO:0009060">
    <property type="term" value="P:aerobic respiration"/>
    <property type="evidence" value="ECO:0007669"/>
    <property type="project" value="TreeGrafter"/>
</dbReference>
<dbReference type="GO" id="GO:0015990">
    <property type="term" value="P:electron transport coupled proton transport"/>
    <property type="evidence" value="ECO:0007669"/>
    <property type="project" value="TreeGrafter"/>
</dbReference>
<dbReference type="FunFam" id="3.40.50.12280:FF:000001">
    <property type="entry name" value="NADH-quinone oxidoreductase subunit B 2"/>
    <property type="match status" value="1"/>
</dbReference>
<dbReference type="Gene3D" id="3.40.50.12280">
    <property type="match status" value="1"/>
</dbReference>
<dbReference type="HAMAP" id="MF_01356">
    <property type="entry name" value="NDH1_NuoB"/>
    <property type="match status" value="1"/>
</dbReference>
<dbReference type="InterPro" id="IPR006137">
    <property type="entry name" value="NADH_UbQ_OxRdtase-like_20kDa"/>
</dbReference>
<dbReference type="InterPro" id="IPR006138">
    <property type="entry name" value="NADH_UQ_OxRdtase_20Kd_su"/>
</dbReference>
<dbReference type="NCBIfam" id="TIGR01957">
    <property type="entry name" value="nuoB_fam"/>
    <property type="match status" value="1"/>
</dbReference>
<dbReference type="NCBIfam" id="NF005012">
    <property type="entry name" value="PRK06411.1"/>
    <property type="match status" value="1"/>
</dbReference>
<dbReference type="PANTHER" id="PTHR11995">
    <property type="entry name" value="NADH DEHYDROGENASE"/>
    <property type="match status" value="1"/>
</dbReference>
<dbReference type="PANTHER" id="PTHR11995:SF14">
    <property type="entry name" value="NADH DEHYDROGENASE [UBIQUINONE] IRON-SULFUR PROTEIN 7, MITOCHONDRIAL"/>
    <property type="match status" value="1"/>
</dbReference>
<dbReference type="Pfam" id="PF01058">
    <property type="entry name" value="Oxidored_q6"/>
    <property type="match status" value="1"/>
</dbReference>
<dbReference type="SUPFAM" id="SSF56770">
    <property type="entry name" value="HydA/Nqo6-like"/>
    <property type="match status" value="1"/>
</dbReference>
<dbReference type="PROSITE" id="PS01150">
    <property type="entry name" value="COMPLEX1_20K"/>
    <property type="match status" value="1"/>
</dbReference>
<accession>B5EN70</accession>
<organism>
    <name type="scientific">Acidithiobacillus ferrooxidans (strain ATCC 53993 / BNL-5-31)</name>
    <name type="common">Leptospirillum ferrooxidans (ATCC 53993)</name>
    <dbReference type="NCBI Taxonomy" id="380394"/>
    <lineage>
        <taxon>Bacteria</taxon>
        <taxon>Pseudomonadati</taxon>
        <taxon>Pseudomonadota</taxon>
        <taxon>Acidithiobacillia</taxon>
        <taxon>Acidithiobacillales</taxon>
        <taxon>Acidithiobacillaceae</taxon>
        <taxon>Acidithiobacillus</taxon>
    </lineage>
</organism>
<evidence type="ECO:0000250" key="1"/>
<evidence type="ECO:0000255" key="2">
    <source>
        <dbReference type="HAMAP-Rule" id="MF_01356"/>
    </source>
</evidence>
<protein>
    <recommendedName>
        <fullName evidence="2">NADH-quinone oxidoreductase subunit B 2</fullName>
        <ecNumber evidence="2">7.1.1.-</ecNumber>
    </recommendedName>
    <alternativeName>
        <fullName evidence="2">NADH dehydrogenase I subunit B 2</fullName>
    </alternativeName>
    <alternativeName>
        <fullName evidence="2">NDH-1 subunit B 2</fullName>
    </alternativeName>
</protein>
<gene>
    <name evidence="2" type="primary">nuoB2</name>
    <name type="ordered locus">Lferr_2256</name>
</gene>
<feature type="chain" id="PRO_0000358338" description="NADH-quinone oxidoreductase subunit B 2">
    <location>
        <begin position="1"/>
        <end position="158"/>
    </location>
</feature>
<feature type="binding site" evidence="2">
    <location>
        <position position="37"/>
    </location>
    <ligand>
        <name>[4Fe-4S] cluster</name>
        <dbReference type="ChEBI" id="CHEBI:49883"/>
    </ligand>
</feature>
<feature type="binding site" evidence="2">
    <location>
        <position position="38"/>
    </location>
    <ligand>
        <name>[4Fe-4S] cluster</name>
        <dbReference type="ChEBI" id="CHEBI:49883"/>
    </ligand>
</feature>
<feature type="binding site" evidence="2">
    <location>
        <position position="102"/>
    </location>
    <ligand>
        <name>[4Fe-4S] cluster</name>
        <dbReference type="ChEBI" id="CHEBI:49883"/>
    </ligand>
</feature>
<feature type="binding site" evidence="2">
    <location>
        <position position="132"/>
    </location>
    <ligand>
        <name>[4Fe-4S] cluster</name>
        <dbReference type="ChEBI" id="CHEBI:49883"/>
    </ligand>
</feature>
<keyword id="KW-0004">4Fe-4S</keyword>
<keyword id="KW-0997">Cell inner membrane</keyword>
<keyword id="KW-1003">Cell membrane</keyword>
<keyword id="KW-0408">Iron</keyword>
<keyword id="KW-0411">Iron-sulfur</keyword>
<keyword id="KW-0472">Membrane</keyword>
<keyword id="KW-0479">Metal-binding</keyword>
<keyword id="KW-0520">NAD</keyword>
<keyword id="KW-0874">Quinone</keyword>
<keyword id="KW-1278">Translocase</keyword>
<keyword id="KW-0813">Transport</keyword>
<keyword id="KW-0830">Ubiquinone</keyword>
<reference key="1">
    <citation type="submission" date="2008-08" db="EMBL/GenBank/DDBJ databases">
        <title>Complete sequence of Acidithiobacillus ferrooxidans ATCC 53993.</title>
        <authorList>
            <person name="Lucas S."/>
            <person name="Copeland A."/>
            <person name="Lapidus A."/>
            <person name="Glavina del Rio T."/>
            <person name="Dalin E."/>
            <person name="Tice H."/>
            <person name="Bruce D."/>
            <person name="Goodwin L."/>
            <person name="Pitluck S."/>
            <person name="Sims D."/>
            <person name="Brettin T."/>
            <person name="Detter J.C."/>
            <person name="Han C."/>
            <person name="Kuske C.R."/>
            <person name="Larimer F."/>
            <person name="Land M."/>
            <person name="Hauser L."/>
            <person name="Kyrpides N."/>
            <person name="Lykidis A."/>
            <person name="Borole A.P."/>
        </authorList>
    </citation>
    <scope>NUCLEOTIDE SEQUENCE [LARGE SCALE GENOMIC DNA]</scope>
    <source>
        <strain>ATCC 53993 / BNL-5-31</strain>
    </source>
</reference>
<proteinExistence type="inferred from homology"/>
<comment type="function">
    <text evidence="1">NDH-1 shuttles electrons from NADH, via FMN and iron-sulfur (Fe-S) centers, to quinones in the respiratory chain. Couples the redox reaction to proton translocation (for every two electrons transferred, four hydrogen ions are translocated across the cytoplasmic membrane), and thus conserves the redox energy in a proton gradient (By similarity).</text>
</comment>
<comment type="catalytic activity">
    <reaction evidence="2">
        <text>a quinone + NADH + 5 H(+)(in) = a quinol + NAD(+) + 4 H(+)(out)</text>
        <dbReference type="Rhea" id="RHEA:57888"/>
        <dbReference type="ChEBI" id="CHEBI:15378"/>
        <dbReference type="ChEBI" id="CHEBI:24646"/>
        <dbReference type="ChEBI" id="CHEBI:57540"/>
        <dbReference type="ChEBI" id="CHEBI:57945"/>
        <dbReference type="ChEBI" id="CHEBI:132124"/>
    </reaction>
</comment>
<comment type="cofactor">
    <cofactor evidence="2">
        <name>[4Fe-4S] cluster</name>
        <dbReference type="ChEBI" id="CHEBI:49883"/>
    </cofactor>
    <text evidence="2">Binds 1 [4Fe-4S] cluster.</text>
</comment>
<comment type="subunit">
    <text evidence="2">NDH-1 is composed of 14 different subunits. Subunits NuoB, C, D, E, F, and G constitute the peripheral sector of the complex.</text>
</comment>
<comment type="subcellular location">
    <subcellularLocation>
        <location evidence="2">Cell inner membrane</location>
        <topology evidence="2">Peripheral membrane protein</topology>
        <orientation evidence="2">Cytoplasmic side</orientation>
    </subcellularLocation>
</comment>
<comment type="similarity">
    <text evidence="2">Belongs to the complex I 20 kDa subunit family.</text>
</comment>